<gene>
    <name evidence="1" type="primary">ihfB</name>
    <name evidence="1" type="synonym">himD</name>
    <name type="ordered locus">BT_0014</name>
</gene>
<name>IHFB_BART1</name>
<protein>
    <recommendedName>
        <fullName evidence="1">Integration host factor subunit beta</fullName>
        <shortName evidence="1">IHF-beta</shortName>
    </recommendedName>
</protein>
<comment type="function">
    <text evidence="1">This protein is one of the two subunits of integration host factor, a specific DNA-binding protein that functions in genetic recombination as well as in transcriptional and translational control.</text>
</comment>
<comment type="subunit">
    <text evidence="1">Heterodimer of an alpha and a beta chain.</text>
</comment>
<comment type="similarity">
    <text evidence="1">Belongs to the bacterial histone-like protein family.</text>
</comment>
<keyword id="KW-0233">DNA recombination</keyword>
<keyword id="KW-0238">DNA-binding</keyword>
<keyword id="KW-0804">Transcription</keyword>
<keyword id="KW-0805">Transcription regulation</keyword>
<keyword id="KW-0810">Translation regulation</keyword>
<accession>A9IL25</accession>
<proteinExistence type="inferred from homology"/>
<sequence length="92" mass="10450">MVKSELVQIIARHNPHLFQRDVENIVNAIFEEISTALANGDRVELRGFGAFSVKSRSARNGRNPRTGEAVAVDEKWIPFFKTGKDLRDRLNQ</sequence>
<dbReference type="EMBL" id="AM260525">
    <property type="protein sequence ID" value="CAK00518.1"/>
    <property type="molecule type" value="Genomic_DNA"/>
</dbReference>
<dbReference type="RefSeq" id="WP_012230270.1">
    <property type="nucleotide sequence ID" value="NC_010161.1"/>
</dbReference>
<dbReference type="SMR" id="A9IL25"/>
<dbReference type="KEGG" id="btr:BT_0014"/>
<dbReference type="eggNOG" id="COG0776">
    <property type="taxonomic scope" value="Bacteria"/>
</dbReference>
<dbReference type="HOGENOM" id="CLU_105066_2_0_5"/>
<dbReference type="Proteomes" id="UP000001592">
    <property type="component" value="Chromosome"/>
</dbReference>
<dbReference type="GO" id="GO:0005694">
    <property type="term" value="C:chromosome"/>
    <property type="evidence" value="ECO:0007669"/>
    <property type="project" value="InterPro"/>
</dbReference>
<dbReference type="GO" id="GO:0005829">
    <property type="term" value="C:cytosol"/>
    <property type="evidence" value="ECO:0007669"/>
    <property type="project" value="TreeGrafter"/>
</dbReference>
<dbReference type="GO" id="GO:0003677">
    <property type="term" value="F:DNA binding"/>
    <property type="evidence" value="ECO:0007669"/>
    <property type="project" value="UniProtKB-UniRule"/>
</dbReference>
<dbReference type="GO" id="GO:0030527">
    <property type="term" value="F:structural constituent of chromatin"/>
    <property type="evidence" value="ECO:0007669"/>
    <property type="project" value="InterPro"/>
</dbReference>
<dbReference type="GO" id="GO:0006310">
    <property type="term" value="P:DNA recombination"/>
    <property type="evidence" value="ECO:0007669"/>
    <property type="project" value="UniProtKB-UniRule"/>
</dbReference>
<dbReference type="GO" id="GO:0006355">
    <property type="term" value="P:regulation of DNA-templated transcription"/>
    <property type="evidence" value="ECO:0007669"/>
    <property type="project" value="UniProtKB-UniRule"/>
</dbReference>
<dbReference type="GO" id="GO:0006417">
    <property type="term" value="P:regulation of translation"/>
    <property type="evidence" value="ECO:0007669"/>
    <property type="project" value="UniProtKB-UniRule"/>
</dbReference>
<dbReference type="CDD" id="cd13836">
    <property type="entry name" value="IHF_B"/>
    <property type="match status" value="1"/>
</dbReference>
<dbReference type="Gene3D" id="4.10.520.10">
    <property type="entry name" value="IHF-like DNA-binding proteins"/>
    <property type="match status" value="1"/>
</dbReference>
<dbReference type="HAMAP" id="MF_00381">
    <property type="entry name" value="IHF_beta"/>
    <property type="match status" value="1"/>
</dbReference>
<dbReference type="InterPro" id="IPR000119">
    <property type="entry name" value="Hist_DNA-bd"/>
</dbReference>
<dbReference type="InterPro" id="IPR020816">
    <property type="entry name" value="Histone-like_DNA-bd_CS"/>
</dbReference>
<dbReference type="InterPro" id="IPR010992">
    <property type="entry name" value="IHF-like_DNA-bd_dom_sf"/>
</dbReference>
<dbReference type="InterPro" id="IPR005685">
    <property type="entry name" value="IHF_beta"/>
</dbReference>
<dbReference type="NCBIfam" id="TIGR00988">
    <property type="entry name" value="hip"/>
    <property type="match status" value="1"/>
</dbReference>
<dbReference type="NCBIfam" id="NF001222">
    <property type="entry name" value="PRK00199.1"/>
    <property type="match status" value="1"/>
</dbReference>
<dbReference type="PANTHER" id="PTHR33175">
    <property type="entry name" value="DNA-BINDING PROTEIN HU"/>
    <property type="match status" value="1"/>
</dbReference>
<dbReference type="PANTHER" id="PTHR33175:SF5">
    <property type="entry name" value="INTEGRATION HOST FACTOR SUBUNIT BETA"/>
    <property type="match status" value="1"/>
</dbReference>
<dbReference type="Pfam" id="PF00216">
    <property type="entry name" value="Bac_DNA_binding"/>
    <property type="match status" value="1"/>
</dbReference>
<dbReference type="PRINTS" id="PR01727">
    <property type="entry name" value="DNABINDINGHU"/>
</dbReference>
<dbReference type="SMART" id="SM00411">
    <property type="entry name" value="BHL"/>
    <property type="match status" value="1"/>
</dbReference>
<dbReference type="SUPFAM" id="SSF47729">
    <property type="entry name" value="IHF-like DNA-binding proteins"/>
    <property type="match status" value="1"/>
</dbReference>
<dbReference type="PROSITE" id="PS00045">
    <property type="entry name" value="HISTONE_LIKE"/>
    <property type="match status" value="1"/>
</dbReference>
<organism>
    <name type="scientific">Bartonella tribocorum (strain CIP 105476 / IBS 506)</name>
    <dbReference type="NCBI Taxonomy" id="382640"/>
    <lineage>
        <taxon>Bacteria</taxon>
        <taxon>Pseudomonadati</taxon>
        <taxon>Pseudomonadota</taxon>
        <taxon>Alphaproteobacteria</taxon>
        <taxon>Hyphomicrobiales</taxon>
        <taxon>Bartonellaceae</taxon>
        <taxon>Bartonella</taxon>
    </lineage>
</organism>
<evidence type="ECO:0000255" key="1">
    <source>
        <dbReference type="HAMAP-Rule" id="MF_00381"/>
    </source>
</evidence>
<feature type="chain" id="PRO_1000190435" description="Integration host factor subunit beta">
    <location>
        <begin position="1"/>
        <end position="92"/>
    </location>
</feature>
<reference key="1">
    <citation type="journal article" date="2007" name="Nat. Genet.">
        <title>Genomic analysis of Bartonella identifies type IV secretion systems as host adaptability factors.</title>
        <authorList>
            <person name="Saenz H.L."/>
            <person name="Engel P."/>
            <person name="Stoeckli M.C."/>
            <person name="Lanz C."/>
            <person name="Raddatz G."/>
            <person name="Vayssier-Taussat M."/>
            <person name="Birtles R."/>
            <person name="Schuster S.C."/>
            <person name="Dehio C."/>
        </authorList>
    </citation>
    <scope>NUCLEOTIDE SEQUENCE [LARGE SCALE GENOMIC DNA]</scope>
    <source>
        <strain>CIP 105476 / IBS 506</strain>
    </source>
</reference>